<name>CDII8_BURPE</name>
<feature type="chain" id="PRO_0000429993" description="Immunity protein CdiI">
    <location>
        <begin position="1"/>
        <end position="109"/>
    </location>
</feature>
<organism>
    <name type="scientific">Burkholderia pseudomallei</name>
    <name type="common">Pseudomonas pseudomallei</name>
    <dbReference type="NCBI Taxonomy" id="28450"/>
    <lineage>
        <taxon>Bacteria</taxon>
        <taxon>Pseudomonadati</taxon>
        <taxon>Pseudomonadota</taxon>
        <taxon>Betaproteobacteria</taxon>
        <taxon>Burkholderiales</taxon>
        <taxon>Burkholderiaceae</taxon>
        <taxon>Burkholderia</taxon>
        <taxon>pseudomallei group</taxon>
    </lineage>
</organism>
<accession>H9T8I0</accession>
<proteinExistence type="evidence at protein level"/>
<protein>
    <recommendedName>
        <fullName>Immunity protein CdiI</fullName>
    </recommendedName>
</protein>
<sequence length="109" mass="11891">MNIDLQRRYDSSDDFFSLGGSVVMKLSADAAIAVCERAGQHGLVVARIEGGIWHFPGFEARLDCIWDGIDPPVDVGVAEQNNLAAAEFVRSESQEHDVFVVTAPEITGW</sequence>
<comment type="function">
    <text evidence="1">Immunity protein component of a toxin-immunity protein module, which functions as a cellular contact-dependent growth inhibition (CDI) system. CDI modules allow bacteria to communicate with and inhibit the growth of closely related neighboring bacteria in a contact-dependent fashion. Neutralizes the toxic activity of cognate toxin CdiA (C-terminal 282 residue CT fragment) upon expression in E.coli. Does not inhibit toxic activity of CdiA from other strains of B.pseudomallei.</text>
</comment>
<comment type="subunit">
    <text evidence="1">Specifically interacts with cognate toxin CdiA, which inhibits the toxin.</text>
</comment>
<reference key="1">
    <citation type="journal article" date="2008" name="PLoS Negl. Trop. Dis.">
        <title>Genetic diversity and microevolution of Burkholderia pseudomallei in the environment.</title>
        <authorList>
            <person name="Chantratita N."/>
            <person name="Wuthiekanun V."/>
            <person name="Limmathurotsakul D."/>
            <person name="Vesaratchavest M."/>
            <person name="Thanwisai A."/>
            <person name="Amornchai P."/>
            <person name="Tumapa S."/>
            <person name="Feil E.J."/>
            <person name="Day N.P."/>
            <person name="Peacock S.J."/>
        </authorList>
    </citation>
    <scope>NUCLEOTIDE SEQUENCE [GENOMIC DNA]</scope>
    <source>
        <strain>E478</strain>
    </source>
</reference>
<reference key="2">
    <citation type="journal article" date="2012" name="Mol. Microbiol.">
        <title>The toxin/immunity network of Burkholderia pseudomallei contact-dependent growth inhibition (CDI) systems.</title>
        <authorList>
            <person name="Nikolakakis K."/>
            <person name="Amber S."/>
            <person name="Wilbur J.S."/>
            <person name="Diner E.J."/>
            <person name="Aoki S.K."/>
            <person name="Poole S.J."/>
            <person name="Tuanyok A."/>
            <person name="Keim P.S."/>
            <person name="Peacock S."/>
            <person name="Hayes C.S."/>
            <person name="Low D.A."/>
        </authorList>
    </citation>
    <scope>FUNCTION</scope>
    <scope>INTERACTION WITH CDIA</scope>
    <scope>SUBUNIT</scope>
    <source>
        <strain>E478</strain>
    </source>
</reference>
<gene>
    <name type="primary">cdiI</name>
</gene>
<dbReference type="EMBL" id="JQ423913">
    <property type="protein sequence ID" value="AFG17279.1"/>
    <property type="molecule type" value="Genomic_DNA"/>
</dbReference>
<dbReference type="RefSeq" id="WP_009941131.1">
    <property type="nucleotide sequence ID" value="NZ_WUTV01000013.1"/>
</dbReference>
<dbReference type="SMR" id="H9T8I0"/>
<dbReference type="GO" id="GO:0030153">
    <property type="term" value="P:bacteriocin immunity"/>
    <property type="evidence" value="ECO:0007669"/>
    <property type="project" value="InterPro"/>
</dbReference>
<dbReference type="Gene3D" id="3.30.190.30">
    <property type="match status" value="1"/>
</dbReference>
<dbReference type="InterPro" id="IPR020127">
    <property type="entry name" value="Colicin-E5_imm"/>
</dbReference>
<dbReference type="InterPro" id="IPR037234">
    <property type="entry name" value="ImmE5_sf"/>
</dbReference>
<dbReference type="Pfam" id="PF11480">
    <property type="entry name" value="ImmE5"/>
    <property type="match status" value="1"/>
</dbReference>
<dbReference type="SUPFAM" id="SSF143469">
    <property type="entry name" value="ImmE5-like"/>
    <property type="match status" value="1"/>
</dbReference>
<evidence type="ECO:0000269" key="1">
    <source>
    </source>
</evidence>